<accession>Q9XAY7</accession>
<accession>A1IRP9</accession>
<gene>
    <name evidence="1" type="primary">glyA</name>
    <name type="ordered locus">NMA1254</name>
</gene>
<reference key="1">
    <citation type="journal article" date="1999" name="Mol. Microbiol.">
        <title>The opcA and (psi)opcB regions in Neisseria: genes, pseudogenes, deletions, insertion elements and DNA islands.</title>
        <authorList>
            <person name="Zhu P."/>
            <person name="Morelli G."/>
            <person name="Achtman M."/>
        </authorList>
    </citation>
    <scope>NUCLEOTIDE SEQUENCE [GENOMIC DNA]</scope>
    <source>
        <strain>DSM 15465 / Z2491</strain>
    </source>
</reference>
<reference key="2">
    <citation type="journal article" date="2000" name="Nature">
        <title>Complete DNA sequence of a serogroup A strain of Neisseria meningitidis Z2491.</title>
        <authorList>
            <person name="Parkhill J."/>
            <person name="Achtman M."/>
            <person name="James K.D."/>
            <person name="Bentley S.D."/>
            <person name="Churcher C.M."/>
            <person name="Klee S.R."/>
            <person name="Morelli G."/>
            <person name="Basham D."/>
            <person name="Brown D."/>
            <person name="Chillingworth T."/>
            <person name="Davies R.M."/>
            <person name="Davis P."/>
            <person name="Devlin K."/>
            <person name="Feltwell T."/>
            <person name="Hamlin N."/>
            <person name="Holroyd S."/>
            <person name="Jagels K."/>
            <person name="Leather S."/>
            <person name="Moule S."/>
            <person name="Mungall K.L."/>
            <person name="Quail M.A."/>
            <person name="Rajandream M.A."/>
            <person name="Rutherford K.M."/>
            <person name="Simmonds M."/>
            <person name="Skelton J."/>
            <person name="Whitehead S."/>
            <person name="Spratt B.G."/>
            <person name="Barrell B.G."/>
        </authorList>
    </citation>
    <scope>NUCLEOTIDE SEQUENCE [LARGE SCALE GENOMIC DNA]</scope>
    <source>
        <strain>DSM 15465 / Z2491</strain>
    </source>
</reference>
<evidence type="ECO:0000255" key="1">
    <source>
        <dbReference type="HAMAP-Rule" id="MF_00051"/>
    </source>
</evidence>
<sequence>MFSKSVTLAQYDPDLAAAIAQEDQRQQDHVELIASENYVSCAVMEAQGSQLTNKYAEGYPGKRYYGGCEYVDIVEQLAIDRVKKLFGAQYANVQPHSGSQANQAVYASVLKPGDTILGMSLAHGGHLTHGASVNISGKLYNAVTYGLDENEVLDYAEVERLALEHKPKMIVAGASAYALQIDWAKFREIADKVGAYLFVDMAHYAGLVAGGEYPNPVPFCDFVTTTTHKTLRGPRGGVILCRDNTHEKALNSSIFPSLQGGPLMHVIAAKAVAFKEALQPEFKQYAKQVKINAAAMAEELVKRGLRIVSGRTESHVFLVDLQPMKITGKAAEAALGKAHITVNKNAIPNDPEKPFVTSGIRIGSAAMTTRGFNEADARVLANLVADVLSNPEDEANLAKVREQVTALCNKYPVYGA</sequence>
<name>GLYA_NEIMA</name>
<proteinExistence type="inferred from homology"/>
<protein>
    <recommendedName>
        <fullName evidence="1">Serine hydroxymethyltransferase</fullName>
        <shortName evidence="1">SHMT</shortName>
        <shortName evidence="1">Serine methylase</shortName>
        <ecNumber evidence="1">2.1.2.1</ecNumber>
    </recommendedName>
</protein>
<keyword id="KW-0028">Amino-acid biosynthesis</keyword>
<keyword id="KW-0963">Cytoplasm</keyword>
<keyword id="KW-0554">One-carbon metabolism</keyword>
<keyword id="KW-0663">Pyridoxal phosphate</keyword>
<keyword id="KW-0808">Transferase</keyword>
<dbReference type="EC" id="2.1.2.1" evidence="1"/>
<dbReference type="EMBL" id="AJ242841">
    <property type="protein sequence ID" value="CAB44965.1"/>
    <property type="molecule type" value="Genomic_DNA"/>
</dbReference>
<dbReference type="EMBL" id="AL157959">
    <property type="protein sequence ID" value="CAM08443.1"/>
    <property type="molecule type" value="Genomic_DNA"/>
</dbReference>
<dbReference type="PIR" id="E81893">
    <property type="entry name" value="E81893"/>
</dbReference>
<dbReference type="RefSeq" id="WP_002235737.1">
    <property type="nucleotide sequence ID" value="NC_003116.1"/>
</dbReference>
<dbReference type="SMR" id="Q9XAY7"/>
<dbReference type="EnsemblBacteria" id="CAM08443">
    <property type="protein sequence ID" value="CAM08443"/>
    <property type="gene ID" value="NMA1254"/>
</dbReference>
<dbReference type="GeneID" id="93386141"/>
<dbReference type="KEGG" id="nma:NMA1254"/>
<dbReference type="HOGENOM" id="CLU_022477_2_1_4"/>
<dbReference type="UniPathway" id="UPA00193"/>
<dbReference type="UniPathway" id="UPA00288">
    <property type="reaction ID" value="UER01023"/>
</dbReference>
<dbReference type="Proteomes" id="UP000000626">
    <property type="component" value="Chromosome"/>
</dbReference>
<dbReference type="GO" id="GO:0005829">
    <property type="term" value="C:cytosol"/>
    <property type="evidence" value="ECO:0007669"/>
    <property type="project" value="TreeGrafter"/>
</dbReference>
<dbReference type="GO" id="GO:0004372">
    <property type="term" value="F:glycine hydroxymethyltransferase activity"/>
    <property type="evidence" value="ECO:0007669"/>
    <property type="project" value="UniProtKB-UniRule"/>
</dbReference>
<dbReference type="GO" id="GO:0030170">
    <property type="term" value="F:pyridoxal phosphate binding"/>
    <property type="evidence" value="ECO:0007669"/>
    <property type="project" value="UniProtKB-UniRule"/>
</dbReference>
<dbReference type="GO" id="GO:0019264">
    <property type="term" value="P:glycine biosynthetic process from serine"/>
    <property type="evidence" value="ECO:0007669"/>
    <property type="project" value="UniProtKB-UniRule"/>
</dbReference>
<dbReference type="GO" id="GO:0035999">
    <property type="term" value="P:tetrahydrofolate interconversion"/>
    <property type="evidence" value="ECO:0007669"/>
    <property type="project" value="UniProtKB-UniRule"/>
</dbReference>
<dbReference type="CDD" id="cd00378">
    <property type="entry name" value="SHMT"/>
    <property type="match status" value="1"/>
</dbReference>
<dbReference type="FunFam" id="3.40.640.10:FF:000001">
    <property type="entry name" value="Serine hydroxymethyltransferase"/>
    <property type="match status" value="1"/>
</dbReference>
<dbReference type="FunFam" id="3.90.1150.10:FF:000003">
    <property type="entry name" value="Serine hydroxymethyltransferase"/>
    <property type="match status" value="1"/>
</dbReference>
<dbReference type="Gene3D" id="3.90.1150.10">
    <property type="entry name" value="Aspartate Aminotransferase, domain 1"/>
    <property type="match status" value="1"/>
</dbReference>
<dbReference type="Gene3D" id="3.40.640.10">
    <property type="entry name" value="Type I PLP-dependent aspartate aminotransferase-like (Major domain)"/>
    <property type="match status" value="1"/>
</dbReference>
<dbReference type="HAMAP" id="MF_00051">
    <property type="entry name" value="SHMT"/>
    <property type="match status" value="1"/>
</dbReference>
<dbReference type="InterPro" id="IPR015424">
    <property type="entry name" value="PyrdxlP-dep_Trfase"/>
</dbReference>
<dbReference type="InterPro" id="IPR015421">
    <property type="entry name" value="PyrdxlP-dep_Trfase_major"/>
</dbReference>
<dbReference type="InterPro" id="IPR015422">
    <property type="entry name" value="PyrdxlP-dep_Trfase_small"/>
</dbReference>
<dbReference type="InterPro" id="IPR001085">
    <property type="entry name" value="Ser_HO-MeTrfase"/>
</dbReference>
<dbReference type="InterPro" id="IPR049943">
    <property type="entry name" value="Ser_HO-MeTrfase-like"/>
</dbReference>
<dbReference type="InterPro" id="IPR019798">
    <property type="entry name" value="Ser_HO-MeTrfase_PLP_BS"/>
</dbReference>
<dbReference type="InterPro" id="IPR039429">
    <property type="entry name" value="SHMT-like_dom"/>
</dbReference>
<dbReference type="NCBIfam" id="NF000586">
    <property type="entry name" value="PRK00011.1"/>
    <property type="match status" value="1"/>
</dbReference>
<dbReference type="PANTHER" id="PTHR11680">
    <property type="entry name" value="SERINE HYDROXYMETHYLTRANSFERASE"/>
    <property type="match status" value="1"/>
</dbReference>
<dbReference type="PANTHER" id="PTHR11680:SF50">
    <property type="entry name" value="SERINE HYDROXYMETHYLTRANSFERASE"/>
    <property type="match status" value="1"/>
</dbReference>
<dbReference type="Pfam" id="PF00464">
    <property type="entry name" value="SHMT"/>
    <property type="match status" value="1"/>
</dbReference>
<dbReference type="PIRSF" id="PIRSF000412">
    <property type="entry name" value="SHMT"/>
    <property type="match status" value="1"/>
</dbReference>
<dbReference type="SUPFAM" id="SSF53383">
    <property type="entry name" value="PLP-dependent transferases"/>
    <property type="match status" value="1"/>
</dbReference>
<dbReference type="PROSITE" id="PS00096">
    <property type="entry name" value="SHMT"/>
    <property type="match status" value="1"/>
</dbReference>
<comment type="function">
    <text evidence="1">Catalyzes the reversible interconversion of serine and glycine with tetrahydrofolate (THF) serving as the one-carbon carrier. This reaction serves as the major source of one-carbon groups required for the biosynthesis of purines, thymidylate, methionine, and other important biomolecules. Also exhibits THF-independent aldolase activity toward beta-hydroxyamino acids, producing glycine and aldehydes, via a retro-aldol mechanism.</text>
</comment>
<comment type="catalytic activity">
    <reaction evidence="1">
        <text>(6R)-5,10-methylene-5,6,7,8-tetrahydrofolate + glycine + H2O = (6S)-5,6,7,8-tetrahydrofolate + L-serine</text>
        <dbReference type="Rhea" id="RHEA:15481"/>
        <dbReference type="ChEBI" id="CHEBI:15377"/>
        <dbReference type="ChEBI" id="CHEBI:15636"/>
        <dbReference type="ChEBI" id="CHEBI:33384"/>
        <dbReference type="ChEBI" id="CHEBI:57305"/>
        <dbReference type="ChEBI" id="CHEBI:57453"/>
        <dbReference type="EC" id="2.1.2.1"/>
    </reaction>
</comment>
<comment type="cofactor">
    <cofactor evidence="1">
        <name>pyridoxal 5'-phosphate</name>
        <dbReference type="ChEBI" id="CHEBI:597326"/>
    </cofactor>
</comment>
<comment type="pathway">
    <text evidence="1">One-carbon metabolism; tetrahydrofolate interconversion.</text>
</comment>
<comment type="pathway">
    <text evidence="1">Amino-acid biosynthesis; glycine biosynthesis; glycine from L-serine: step 1/1.</text>
</comment>
<comment type="subunit">
    <text evidence="1">Homodimer.</text>
</comment>
<comment type="subcellular location">
    <subcellularLocation>
        <location evidence="1">Cytoplasm</location>
    </subcellularLocation>
</comment>
<comment type="similarity">
    <text evidence="1">Belongs to the SHMT family.</text>
</comment>
<feature type="chain" id="PRO_0000113622" description="Serine hydroxymethyltransferase">
    <location>
        <begin position="1"/>
        <end position="416"/>
    </location>
</feature>
<feature type="binding site" evidence="1">
    <location>
        <position position="121"/>
    </location>
    <ligand>
        <name>(6S)-5,6,7,8-tetrahydrofolate</name>
        <dbReference type="ChEBI" id="CHEBI:57453"/>
    </ligand>
</feature>
<feature type="binding site" evidence="1">
    <location>
        <begin position="125"/>
        <end position="127"/>
    </location>
    <ligand>
        <name>(6S)-5,6,7,8-tetrahydrofolate</name>
        <dbReference type="ChEBI" id="CHEBI:57453"/>
    </ligand>
</feature>
<feature type="site" description="Plays an important role in substrate specificity" evidence="1">
    <location>
        <position position="228"/>
    </location>
</feature>
<feature type="modified residue" description="N6-(pyridoxal phosphate)lysine" evidence="1">
    <location>
        <position position="229"/>
    </location>
</feature>
<organism>
    <name type="scientific">Neisseria meningitidis serogroup A / serotype 4A (strain DSM 15465 / Z2491)</name>
    <dbReference type="NCBI Taxonomy" id="122587"/>
    <lineage>
        <taxon>Bacteria</taxon>
        <taxon>Pseudomonadati</taxon>
        <taxon>Pseudomonadota</taxon>
        <taxon>Betaproteobacteria</taxon>
        <taxon>Neisseriales</taxon>
        <taxon>Neisseriaceae</taxon>
        <taxon>Neisseria</taxon>
    </lineage>
</organism>